<comment type="function">
    <text evidence="1">Methyltransferase required for the conversion of demethylmenaquinol (DMKH2) to menaquinol (MKH2).</text>
</comment>
<comment type="catalytic activity">
    <reaction evidence="1">
        <text>a 2-demethylmenaquinol + S-adenosyl-L-methionine = a menaquinol + S-adenosyl-L-homocysteine + H(+)</text>
        <dbReference type="Rhea" id="RHEA:42640"/>
        <dbReference type="Rhea" id="RHEA-COMP:9539"/>
        <dbReference type="Rhea" id="RHEA-COMP:9563"/>
        <dbReference type="ChEBI" id="CHEBI:15378"/>
        <dbReference type="ChEBI" id="CHEBI:18151"/>
        <dbReference type="ChEBI" id="CHEBI:55437"/>
        <dbReference type="ChEBI" id="CHEBI:57856"/>
        <dbReference type="ChEBI" id="CHEBI:59789"/>
        <dbReference type="EC" id="2.1.1.163"/>
    </reaction>
</comment>
<comment type="pathway">
    <text evidence="1">Quinol/quinone metabolism; menaquinone biosynthesis; menaquinol from 1,4-dihydroxy-2-naphthoate: step 2/2.</text>
</comment>
<comment type="similarity">
    <text evidence="1">Belongs to the class I-like SAM-binding methyltransferase superfamily. MenG/UbiE family.</text>
</comment>
<proteinExistence type="inferred from homology"/>
<organism>
    <name type="scientific">Chlamydia felis (strain Fe/C-56)</name>
    <name type="common">Chlamydophila felis</name>
    <dbReference type="NCBI Taxonomy" id="264202"/>
    <lineage>
        <taxon>Bacteria</taxon>
        <taxon>Pseudomonadati</taxon>
        <taxon>Chlamydiota</taxon>
        <taxon>Chlamydiia</taxon>
        <taxon>Chlamydiales</taxon>
        <taxon>Chlamydiaceae</taxon>
        <taxon>Chlamydia/Chlamydophila group</taxon>
        <taxon>Chlamydia</taxon>
    </lineage>
</organism>
<reference key="1">
    <citation type="journal article" date="2006" name="DNA Res.">
        <title>Genome sequence of the cat pathogen, Chlamydophila felis.</title>
        <authorList>
            <person name="Azuma Y."/>
            <person name="Hirakawa H."/>
            <person name="Yamashita A."/>
            <person name="Cai Y."/>
            <person name="Rahman M.A."/>
            <person name="Suzuki H."/>
            <person name="Mitaku S."/>
            <person name="Toh H."/>
            <person name="Goto S."/>
            <person name="Murakami T."/>
            <person name="Sugi K."/>
            <person name="Hayashi H."/>
            <person name="Fukushi H."/>
            <person name="Hattori M."/>
            <person name="Kuhara S."/>
            <person name="Shirai M."/>
        </authorList>
    </citation>
    <scope>NUCLEOTIDE SEQUENCE [LARGE SCALE GENOMIC DNA]</scope>
    <source>
        <strain>Fe/C-56</strain>
    </source>
</reference>
<feature type="chain" id="PRO_1000056240" description="Demethylmenaquinone methyltransferase">
    <location>
        <begin position="1"/>
        <end position="230"/>
    </location>
</feature>
<feature type="binding site" evidence="1">
    <location>
        <position position="57"/>
    </location>
    <ligand>
        <name>S-adenosyl-L-methionine</name>
        <dbReference type="ChEBI" id="CHEBI:59789"/>
    </ligand>
</feature>
<feature type="binding site" evidence="1">
    <location>
        <position position="77"/>
    </location>
    <ligand>
        <name>S-adenosyl-L-methionine</name>
        <dbReference type="ChEBI" id="CHEBI:59789"/>
    </ligand>
</feature>
<feature type="binding site" evidence="1">
    <location>
        <begin position="101"/>
        <end position="102"/>
    </location>
    <ligand>
        <name>S-adenosyl-L-methionine</name>
        <dbReference type="ChEBI" id="CHEBI:59789"/>
    </ligand>
</feature>
<feature type="binding site" evidence="1">
    <location>
        <position position="118"/>
    </location>
    <ligand>
        <name>S-adenosyl-L-methionine</name>
        <dbReference type="ChEBI" id="CHEBI:59789"/>
    </ligand>
</feature>
<sequence length="230" mass="26404">MPPSINEPNLQEMFDSLAPKYDRINSILSLGMHHLWNRTFARMLGKSEHLLDLCSGTGKVAYRYIRDYPGSKATLVDFSEKMLLAAQQRYPDAPFTFIEGDIVQLPIDEESQTLASMSYGLRNLSNPKQALEEIHRILQHNGCLGILELTSPSRKHPLYLAHRLYLNFLVPWLGRLCSKNKQAYTYLAESIKKLPSDDYLEQLFQNAKFQVSKKRKLAFGSATIWILKKI</sequence>
<gene>
    <name evidence="1" type="primary">menG</name>
    <name type="ordered locus">CF0778</name>
</gene>
<evidence type="ECO:0000255" key="1">
    <source>
        <dbReference type="HAMAP-Rule" id="MF_01813"/>
    </source>
</evidence>
<name>MENG_CHLFF</name>
<dbReference type="EC" id="2.1.1.163" evidence="1"/>
<dbReference type="EMBL" id="AP006861">
    <property type="protein sequence ID" value="BAE81550.1"/>
    <property type="molecule type" value="Genomic_DNA"/>
</dbReference>
<dbReference type="RefSeq" id="WP_011458328.1">
    <property type="nucleotide sequence ID" value="NC_007899.1"/>
</dbReference>
<dbReference type="SMR" id="Q253I8"/>
<dbReference type="STRING" id="264202.CF0778"/>
<dbReference type="KEGG" id="cfe:CF0778"/>
<dbReference type="eggNOG" id="COG2226">
    <property type="taxonomic scope" value="Bacteria"/>
</dbReference>
<dbReference type="HOGENOM" id="CLU_037990_0_0_0"/>
<dbReference type="OrthoDB" id="9808140at2"/>
<dbReference type="UniPathway" id="UPA00079">
    <property type="reaction ID" value="UER00169"/>
</dbReference>
<dbReference type="Proteomes" id="UP000001260">
    <property type="component" value="Chromosome"/>
</dbReference>
<dbReference type="GO" id="GO:0043770">
    <property type="term" value="F:demethylmenaquinone methyltransferase activity"/>
    <property type="evidence" value="ECO:0007669"/>
    <property type="project" value="UniProtKB-UniRule"/>
</dbReference>
<dbReference type="GO" id="GO:0009234">
    <property type="term" value="P:menaquinone biosynthetic process"/>
    <property type="evidence" value="ECO:0007669"/>
    <property type="project" value="UniProtKB-UniRule"/>
</dbReference>
<dbReference type="GO" id="GO:0032259">
    <property type="term" value="P:methylation"/>
    <property type="evidence" value="ECO:0007669"/>
    <property type="project" value="UniProtKB-KW"/>
</dbReference>
<dbReference type="CDD" id="cd02440">
    <property type="entry name" value="AdoMet_MTases"/>
    <property type="match status" value="1"/>
</dbReference>
<dbReference type="Gene3D" id="3.40.50.150">
    <property type="entry name" value="Vaccinia Virus protein VP39"/>
    <property type="match status" value="1"/>
</dbReference>
<dbReference type="HAMAP" id="MF_01813">
    <property type="entry name" value="MenG_UbiE_methyltr"/>
    <property type="match status" value="1"/>
</dbReference>
<dbReference type="InterPro" id="IPR029063">
    <property type="entry name" value="SAM-dependent_MTases_sf"/>
</dbReference>
<dbReference type="InterPro" id="IPR004033">
    <property type="entry name" value="UbiE/COQ5_MeTrFase"/>
</dbReference>
<dbReference type="InterPro" id="IPR023576">
    <property type="entry name" value="UbiE/COQ5_MeTrFase_CS"/>
</dbReference>
<dbReference type="NCBIfam" id="TIGR01934">
    <property type="entry name" value="MenG_MenH_UbiE"/>
    <property type="match status" value="1"/>
</dbReference>
<dbReference type="NCBIfam" id="NF001244">
    <property type="entry name" value="PRK00216.1-5"/>
    <property type="match status" value="1"/>
</dbReference>
<dbReference type="PANTHER" id="PTHR43591:SF24">
    <property type="entry name" value="2-METHOXY-6-POLYPRENYL-1,4-BENZOQUINOL METHYLASE, MITOCHONDRIAL"/>
    <property type="match status" value="1"/>
</dbReference>
<dbReference type="PANTHER" id="PTHR43591">
    <property type="entry name" value="METHYLTRANSFERASE"/>
    <property type="match status" value="1"/>
</dbReference>
<dbReference type="Pfam" id="PF01209">
    <property type="entry name" value="Ubie_methyltran"/>
    <property type="match status" value="1"/>
</dbReference>
<dbReference type="SUPFAM" id="SSF53335">
    <property type="entry name" value="S-adenosyl-L-methionine-dependent methyltransferases"/>
    <property type="match status" value="1"/>
</dbReference>
<dbReference type="PROSITE" id="PS51608">
    <property type="entry name" value="SAM_MT_UBIE"/>
    <property type="match status" value="1"/>
</dbReference>
<dbReference type="PROSITE" id="PS01183">
    <property type="entry name" value="UBIE_1"/>
    <property type="match status" value="1"/>
</dbReference>
<accession>Q253I8</accession>
<keyword id="KW-0474">Menaquinone biosynthesis</keyword>
<keyword id="KW-0489">Methyltransferase</keyword>
<keyword id="KW-0949">S-adenosyl-L-methionine</keyword>
<keyword id="KW-0808">Transferase</keyword>
<protein>
    <recommendedName>
        <fullName evidence="1">Demethylmenaquinone methyltransferase</fullName>
        <ecNumber evidence="1">2.1.1.163</ecNumber>
    </recommendedName>
</protein>